<organism>
    <name type="scientific">Mycobacterium bovis (strain BCG / Pasteur 1173P2)</name>
    <dbReference type="NCBI Taxonomy" id="410289"/>
    <lineage>
        <taxon>Bacteria</taxon>
        <taxon>Bacillati</taxon>
        <taxon>Actinomycetota</taxon>
        <taxon>Actinomycetes</taxon>
        <taxon>Mycobacteriales</taxon>
        <taxon>Mycobacteriaceae</taxon>
        <taxon>Mycobacterium</taxon>
        <taxon>Mycobacterium tuberculosis complex</taxon>
    </lineage>
</organism>
<reference key="1">
    <citation type="journal article" date="2007" name="Proc. Natl. Acad. Sci. U.S.A.">
        <title>Genome plasticity of BCG and impact on vaccine efficacy.</title>
        <authorList>
            <person name="Brosch R."/>
            <person name="Gordon S.V."/>
            <person name="Garnier T."/>
            <person name="Eiglmeier K."/>
            <person name="Frigui W."/>
            <person name="Valenti P."/>
            <person name="Dos Santos S."/>
            <person name="Duthoy S."/>
            <person name="Lacroix C."/>
            <person name="Garcia-Pelayo C."/>
            <person name="Inwald J.K."/>
            <person name="Golby P."/>
            <person name="Garcia J.N."/>
            <person name="Hewinson R.G."/>
            <person name="Behr M.A."/>
            <person name="Quail M.A."/>
            <person name="Churcher C."/>
            <person name="Barrell B.G."/>
            <person name="Parkhill J."/>
            <person name="Cole S.T."/>
        </authorList>
    </citation>
    <scope>NUCLEOTIDE SEQUENCE [LARGE SCALE GENOMIC DNA]</scope>
    <source>
        <strain>BCG / Pasteur 1173P2</strain>
    </source>
</reference>
<evidence type="ECO:0000255" key="1">
    <source>
        <dbReference type="HAMAP-Rule" id="MF_01698"/>
    </source>
</evidence>
<comment type="function">
    <text evidence="1">Catalyzes the transfer of acetyl from acetyl-CoA to desacetylmycothiol (Cys-GlcN-Ins) to form mycothiol.</text>
</comment>
<comment type="catalytic activity">
    <reaction evidence="1">
        <text>1D-myo-inositol 2-(L-cysteinylamino)-2-deoxy-alpha-D-glucopyranoside + acetyl-CoA = mycothiol + CoA + H(+)</text>
        <dbReference type="Rhea" id="RHEA:26172"/>
        <dbReference type="ChEBI" id="CHEBI:15378"/>
        <dbReference type="ChEBI" id="CHEBI:16768"/>
        <dbReference type="ChEBI" id="CHEBI:57287"/>
        <dbReference type="ChEBI" id="CHEBI:57288"/>
        <dbReference type="ChEBI" id="CHEBI:58887"/>
        <dbReference type="EC" id="2.3.1.189"/>
    </reaction>
</comment>
<comment type="subunit">
    <text evidence="1">Monomer.</text>
</comment>
<comment type="similarity">
    <text evidence="1">Belongs to the acetyltransferase family. MshD subfamily.</text>
</comment>
<keyword id="KW-0012">Acyltransferase</keyword>
<keyword id="KW-0677">Repeat</keyword>
<keyword id="KW-0808">Transferase</keyword>
<sequence>MTALDWRSALTADEQRSVRALVTATTAVDGVAPVGEQVLRELGQQRTEHLLVAGSRPGGPIIGYLNLSPPRGAGGAMAELVVHPQSRRRGIGTAMARAALAKTAGRNQFWAHGTLDPARATASALGLVGVRELIQMRRPLRDIPEPTIPDGVVIRTYAGTSDDAELLRVNNAAFAGHPEQGGWTAVQLAERRGEAWFDPDGLILAFGDSPRERPGRLLGFHWTKVHPDHPGLGEVYVLGVDPAAQRRGLGQMLTSIGIVSLARRLGGRKTLDPAVEPAVLLYVESDNVAAVRTYQSLGFTTYSVDTAYALAGTDN</sequence>
<proteinExistence type="inferred from homology"/>
<gene>
    <name evidence="1" type="primary">mshD</name>
    <name type="ordered locus">BCG_0871</name>
</gene>
<protein>
    <recommendedName>
        <fullName evidence="1">Mycothiol acetyltransferase</fullName>
        <shortName evidence="1">MSH acetyltransferase</shortName>
        <ecNumber evidence="1">2.3.1.189</ecNumber>
    </recommendedName>
    <alternativeName>
        <fullName evidence="1">Mycothiol synthase</fullName>
    </alternativeName>
</protein>
<feature type="chain" id="PRO_0000400269" description="Mycothiol acetyltransferase">
    <location>
        <begin position="1"/>
        <end position="315"/>
    </location>
</feature>
<feature type="domain" description="N-acetyltransferase 1" evidence="1">
    <location>
        <begin position="4"/>
        <end position="141"/>
    </location>
</feature>
<feature type="domain" description="N-acetyltransferase 2" evidence="1">
    <location>
        <begin position="152"/>
        <end position="315"/>
    </location>
</feature>
<feature type="binding site" evidence="1">
    <location>
        <position position="36"/>
    </location>
    <ligand>
        <name>1D-myo-inositol 2-(L-cysteinylamino)-2-deoxy-alpha-D-glucopyranoside</name>
        <dbReference type="ChEBI" id="CHEBI:58887"/>
    </ligand>
</feature>
<feature type="binding site" evidence="1">
    <location>
        <begin position="80"/>
        <end position="82"/>
    </location>
    <ligand>
        <name>acetyl-CoA</name>
        <dbReference type="ChEBI" id="CHEBI:57288"/>
        <label>1</label>
    </ligand>
</feature>
<feature type="binding site" evidence="1">
    <location>
        <begin position="88"/>
        <end position="93"/>
    </location>
    <ligand>
        <name>acetyl-CoA</name>
        <dbReference type="ChEBI" id="CHEBI:57288"/>
        <label>1</label>
    </ligand>
</feature>
<feature type="binding site" evidence="1">
    <location>
        <position position="179"/>
    </location>
    <ligand>
        <name>1D-myo-inositol 2-(L-cysteinylamino)-2-deoxy-alpha-D-glucopyranoside</name>
        <dbReference type="ChEBI" id="CHEBI:58887"/>
    </ligand>
</feature>
<feature type="binding site" evidence="1">
    <location>
        <position position="224"/>
    </location>
    <ligand>
        <name>1D-myo-inositol 2-(L-cysteinylamino)-2-deoxy-alpha-D-glucopyranoside</name>
        <dbReference type="ChEBI" id="CHEBI:58887"/>
    </ligand>
</feature>
<feature type="binding site" evidence="1">
    <location>
        <position position="234"/>
    </location>
    <ligand>
        <name>1D-myo-inositol 2-(L-cysteinylamino)-2-deoxy-alpha-D-glucopyranoside</name>
        <dbReference type="ChEBI" id="CHEBI:58887"/>
    </ligand>
</feature>
<feature type="binding site" evidence="1">
    <location>
        <begin position="238"/>
        <end position="240"/>
    </location>
    <ligand>
        <name>acetyl-CoA</name>
        <dbReference type="ChEBI" id="CHEBI:57288"/>
        <label>2</label>
    </ligand>
</feature>
<feature type="binding site" evidence="1">
    <location>
        <begin position="245"/>
        <end position="251"/>
    </location>
    <ligand>
        <name>acetyl-CoA</name>
        <dbReference type="ChEBI" id="CHEBI:57288"/>
        <label>2</label>
    </ligand>
</feature>
<feature type="binding site" evidence="1">
    <location>
        <position position="282"/>
    </location>
    <ligand>
        <name>1D-myo-inositol 2-(L-cysteinylamino)-2-deoxy-alpha-D-glucopyranoside</name>
        <dbReference type="ChEBI" id="CHEBI:58887"/>
    </ligand>
</feature>
<feature type="binding site" evidence="1">
    <location>
        <begin position="287"/>
        <end position="292"/>
    </location>
    <ligand>
        <name>acetyl-CoA</name>
        <dbReference type="ChEBI" id="CHEBI:57288"/>
        <label>2</label>
    </ligand>
</feature>
<accession>A1KGV2</accession>
<name>MSHD_MYCBP</name>
<dbReference type="EC" id="2.3.1.189" evidence="1"/>
<dbReference type="EMBL" id="AM408590">
    <property type="protein sequence ID" value="CAL70857.1"/>
    <property type="molecule type" value="Genomic_DNA"/>
</dbReference>
<dbReference type="RefSeq" id="WP_003404307.1">
    <property type="nucleotide sequence ID" value="NC_008769.1"/>
</dbReference>
<dbReference type="SMR" id="A1KGV2"/>
<dbReference type="KEGG" id="mbb:BCG_0871"/>
<dbReference type="HOGENOM" id="CLU_068014_0_0_11"/>
<dbReference type="Proteomes" id="UP000001472">
    <property type="component" value="Chromosome"/>
</dbReference>
<dbReference type="GO" id="GO:0035447">
    <property type="term" value="F:mycothiol synthase activity"/>
    <property type="evidence" value="ECO:0007669"/>
    <property type="project" value="UniProtKB-UniRule"/>
</dbReference>
<dbReference type="GO" id="GO:0008999">
    <property type="term" value="F:protein-N-terminal-alanine acetyltransferase activity"/>
    <property type="evidence" value="ECO:0007669"/>
    <property type="project" value="TreeGrafter"/>
</dbReference>
<dbReference type="GO" id="GO:0010125">
    <property type="term" value="P:mycothiol biosynthetic process"/>
    <property type="evidence" value="ECO:0007669"/>
    <property type="project" value="UniProtKB-UniRule"/>
</dbReference>
<dbReference type="CDD" id="cd04301">
    <property type="entry name" value="NAT_SF"/>
    <property type="match status" value="2"/>
</dbReference>
<dbReference type="FunFam" id="3.40.630.30:FF:000089">
    <property type="entry name" value="Mycothiol acetyltransferase"/>
    <property type="match status" value="1"/>
</dbReference>
<dbReference type="Gene3D" id="3.40.630.30">
    <property type="match status" value="1"/>
</dbReference>
<dbReference type="HAMAP" id="MF_01698">
    <property type="entry name" value="MshD"/>
    <property type="match status" value="1"/>
</dbReference>
<dbReference type="InterPro" id="IPR016181">
    <property type="entry name" value="Acyl_CoA_acyltransferase"/>
</dbReference>
<dbReference type="InterPro" id="IPR000182">
    <property type="entry name" value="GNAT_dom"/>
</dbReference>
<dbReference type="InterPro" id="IPR050276">
    <property type="entry name" value="MshD_Acetyltransferase"/>
</dbReference>
<dbReference type="InterPro" id="IPR017813">
    <property type="entry name" value="Mycothiol_AcTrfase"/>
</dbReference>
<dbReference type="NCBIfam" id="TIGR03448">
    <property type="entry name" value="mycothiol_MshD"/>
    <property type="match status" value="1"/>
</dbReference>
<dbReference type="PANTHER" id="PTHR43617">
    <property type="entry name" value="L-AMINO ACID N-ACETYLTRANSFERASE"/>
    <property type="match status" value="1"/>
</dbReference>
<dbReference type="PANTHER" id="PTHR43617:SF31">
    <property type="entry name" value="MYCOTHIOL ACETYLTRANSFERASE"/>
    <property type="match status" value="1"/>
</dbReference>
<dbReference type="Pfam" id="PF00583">
    <property type="entry name" value="Acetyltransf_1"/>
    <property type="match status" value="2"/>
</dbReference>
<dbReference type="PIRSF" id="PIRSF021524">
    <property type="entry name" value="MSH_acetyltransferase"/>
    <property type="match status" value="1"/>
</dbReference>
<dbReference type="SUPFAM" id="SSF55729">
    <property type="entry name" value="Acyl-CoA N-acyltransferases (Nat)"/>
    <property type="match status" value="1"/>
</dbReference>
<dbReference type="PROSITE" id="PS51186">
    <property type="entry name" value="GNAT"/>
    <property type="match status" value="2"/>
</dbReference>